<gene>
    <name evidence="1" type="primary">fhs</name>
    <name type="ordered locus">SO_0560</name>
</gene>
<keyword id="KW-0067">ATP-binding</keyword>
<keyword id="KW-0436">Ligase</keyword>
<keyword id="KW-0547">Nucleotide-binding</keyword>
<keyword id="KW-0554">One-carbon metabolism</keyword>
<keyword id="KW-1185">Reference proteome</keyword>
<reference key="1">
    <citation type="journal article" date="2002" name="Nat. Biotechnol.">
        <title>Genome sequence of the dissimilatory metal ion-reducing bacterium Shewanella oneidensis.</title>
        <authorList>
            <person name="Heidelberg J.F."/>
            <person name="Paulsen I.T."/>
            <person name="Nelson K.E."/>
            <person name="Gaidos E.J."/>
            <person name="Nelson W.C."/>
            <person name="Read T.D."/>
            <person name="Eisen J.A."/>
            <person name="Seshadri R."/>
            <person name="Ward N.L."/>
            <person name="Methe B.A."/>
            <person name="Clayton R.A."/>
            <person name="Meyer T."/>
            <person name="Tsapin A."/>
            <person name="Scott J."/>
            <person name="Beanan M.J."/>
            <person name="Brinkac L.M."/>
            <person name="Daugherty S.C."/>
            <person name="DeBoy R.T."/>
            <person name="Dodson R.J."/>
            <person name="Durkin A.S."/>
            <person name="Haft D.H."/>
            <person name="Kolonay J.F."/>
            <person name="Madupu R."/>
            <person name="Peterson J.D."/>
            <person name="Umayam L.A."/>
            <person name="White O."/>
            <person name="Wolf A.M."/>
            <person name="Vamathevan J.J."/>
            <person name="Weidman J.F."/>
            <person name="Impraim M."/>
            <person name="Lee K."/>
            <person name="Berry K.J."/>
            <person name="Lee C."/>
            <person name="Mueller J."/>
            <person name="Khouri H.M."/>
            <person name="Gill J."/>
            <person name="Utterback T.R."/>
            <person name="McDonald L.A."/>
            <person name="Feldblyum T.V."/>
            <person name="Smith H.O."/>
            <person name="Venter J.C."/>
            <person name="Nealson K.H."/>
            <person name="Fraser C.M."/>
        </authorList>
    </citation>
    <scope>NUCLEOTIDE SEQUENCE [LARGE SCALE GENOMIC DNA]</scope>
    <source>
        <strain>ATCC 700550 / JCM 31522 / CIP 106686 / LMG 19005 / NCIMB 14063 / MR-1</strain>
    </source>
</reference>
<comment type="catalytic activity">
    <reaction evidence="1">
        <text>(6S)-5,6,7,8-tetrahydrofolate + formate + ATP = (6R)-10-formyltetrahydrofolate + ADP + phosphate</text>
        <dbReference type="Rhea" id="RHEA:20221"/>
        <dbReference type="ChEBI" id="CHEBI:15740"/>
        <dbReference type="ChEBI" id="CHEBI:30616"/>
        <dbReference type="ChEBI" id="CHEBI:43474"/>
        <dbReference type="ChEBI" id="CHEBI:57453"/>
        <dbReference type="ChEBI" id="CHEBI:195366"/>
        <dbReference type="ChEBI" id="CHEBI:456216"/>
        <dbReference type="EC" id="6.3.4.3"/>
    </reaction>
</comment>
<comment type="pathway">
    <text evidence="1">One-carbon metabolism; tetrahydrofolate interconversion.</text>
</comment>
<comment type="similarity">
    <text evidence="1">Belongs to the formate--tetrahydrofolate ligase family.</text>
</comment>
<name>FTHS_SHEON</name>
<feature type="chain" id="PRO_0000199373" description="Formate--tetrahydrofolate ligase">
    <location>
        <begin position="1"/>
        <end position="570"/>
    </location>
</feature>
<feature type="binding site" evidence="1">
    <location>
        <begin position="65"/>
        <end position="72"/>
    </location>
    <ligand>
        <name>ATP</name>
        <dbReference type="ChEBI" id="CHEBI:30616"/>
    </ligand>
</feature>
<protein>
    <recommendedName>
        <fullName evidence="1">Formate--tetrahydrofolate ligase</fullName>
        <ecNumber evidence="1">6.3.4.3</ecNumber>
    </recommendedName>
    <alternativeName>
        <fullName evidence="1">Formyltetrahydrofolate synthetase</fullName>
        <shortName evidence="1">FHS</shortName>
        <shortName evidence="1">FTHFS</shortName>
    </alternativeName>
</protein>
<evidence type="ECO:0000255" key="1">
    <source>
        <dbReference type="HAMAP-Rule" id="MF_01543"/>
    </source>
</evidence>
<dbReference type="EC" id="6.3.4.3" evidence="1"/>
<dbReference type="EMBL" id="AE014299">
    <property type="protein sequence ID" value="AAN53641.1"/>
    <property type="molecule type" value="Genomic_DNA"/>
</dbReference>
<dbReference type="RefSeq" id="NP_716196.1">
    <property type="nucleotide sequence ID" value="NC_004347.2"/>
</dbReference>
<dbReference type="RefSeq" id="WP_011070900.1">
    <property type="nucleotide sequence ID" value="NC_004347.2"/>
</dbReference>
<dbReference type="SMR" id="Q8EJA7"/>
<dbReference type="STRING" id="211586.SO_0560"/>
<dbReference type="PaxDb" id="211586-SO_0560"/>
<dbReference type="KEGG" id="son:SO_0560"/>
<dbReference type="PATRIC" id="fig|211586.12.peg.539"/>
<dbReference type="eggNOG" id="COG2759">
    <property type="taxonomic scope" value="Bacteria"/>
</dbReference>
<dbReference type="HOGENOM" id="CLU_003601_3_3_6"/>
<dbReference type="OrthoDB" id="9761733at2"/>
<dbReference type="PhylomeDB" id="Q8EJA7"/>
<dbReference type="BioCyc" id="SONE211586:G1GMP-531-MONOMER"/>
<dbReference type="UniPathway" id="UPA00193"/>
<dbReference type="Proteomes" id="UP000008186">
    <property type="component" value="Chromosome"/>
</dbReference>
<dbReference type="GO" id="GO:0005524">
    <property type="term" value="F:ATP binding"/>
    <property type="evidence" value="ECO:0007669"/>
    <property type="project" value="UniProtKB-UniRule"/>
</dbReference>
<dbReference type="GO" id="GO:0004329">
    <property type="term" value="F:formate-tetrahydrofolate ligase activity"/>
    <property type="evidence" value="ECO:0007669"/>
    <property type="project" value="UniProtKB-UniRule"/>
</dbReference>
<dbReference type="GO" id="GO:0035999">
    <property type="term" value="P:tetrahydrofolate interconversion"/>
    <property type="evidence" value="ECO:0007669"/>
    <property type="project" value="UniProtKB-UniRule"/>
</dbReference>
<dbReference type="CDD" id="cd00477">
    <property type="entry name" value="FTHFS"/>
    <property type="match status" value="1"/>
</dbReference>
<dbReference type="FunFam" id="3.10.410.10:FF:000001">
    <property type="entry name" value="Putative formate--tetrahydrofolate ligase"/>
    <property type="match status" value="1"/>
</dbReference>
<dbReference type="Gene3D" id="3.30.1510.10">
    <property type="entry name" value="Domain 2, N(10)-formyltetrahydrofolate synthetase"/>
    <property type="match status" value="1"/>
</dbReference>
<dbReference type="Gene3D" id="3.10.410.10">
    <property type="entry name" value="Formyltetrahydrofolate synthetase, domain 3"/>
    <property type="match status" value="1"/>
</dbReference>
<dbReference type="Gene3D" id="3.40.50.300">
    <property type="entry name" value="P-loop containing nucleotide triphosphate hydrolases"/>
    <property type="match status" value="1"/>
</dbReference>
<dbReference type="HAMAP" id="MF_01543">
    <property type="entry name" value="FTHFS"/>
    <property type="match status" value="1"/>
</dbReference>
<dbReference type="InterPro" id="IPR000559">
    <property type="entry name" value="Formate_THF_ligase"/>
</dbReference>
<dbReference type="InterPro" id="IPR020628">
    <property type="entry name" value="Formate_THF_ligase_CS"/>
</dbReference>
<dbReference type="InterPro" id="IPR027417">
    <property type="entry name" value="P-loop_NTPase"/>
</dbReference>
<dbReference type="NCBIfam" id="NF010030">
    <property type="entry name" value="PRK13505.1"/>
    <property type="match status" value="1"/>
</dbReference>
<dbReference type="NCBIfam" id="NF010031">
    <property type="entry name" value="PRK13506.1"/>
    <property type="match status" value="1"/>
</dbReference>
<dbReference type="Pfam" id="PF01268">
    <property type="entry name" value="FTHFS"/>
    <property type="match status" value="1"/>
</dbReference>
<dbReference type="SUPFAM" id="SSF52540">
    <property type="entry name" value="P-loop containing nucleoside triphosphate hydrolases"/>
    <property type="match status" value="1"/>
</dbReference>
<dbReference type="PROSITE" id="PS00721">
    <property type="entry name" value="FTHFS_1"/>
    <property type="match status" value="1"/>
</dbReference>
<sequence length="570" mass="60232">MLTDMEISRRAHLKDIAQLGAEFGLLPEEMQLFGNTKAKVDLQVQQRLAGQPKGKLIIVTAVTPTPHGEGKTVTTIGLTQSLKALGNKVCACIRQPSMGPVFGVKGGAAGGGYAQVVPMQELNLHLTGDIHAVSSAHNLGAAAIASRLYHEMRLGKAEFERQSGLSYLDIDPKGIRWHRVVDHNDRCLREIEVGLGENNGPAYTSGFDITAASELMAILALSRNLTDMRVRIGKLVLALNRQGEAVSADELGVAGAMTAIMADAVKPTLMQTLNGAPCLIHAGPFANIAHGNSSVIADDIALKLADFVVTEGGFGSDMGFEKFCNIKARQSGLIPSAAVLVTTLKALKANSGLASDTDINAPDQARLEAGFANLNWHINNVVQYGLPVVVAINRFASDTDAELNWLMEAVRGTAAFGCELSEAFSQGEDGAMALAQTVIRACEQPSEFRLLYPDNMELEAKLSTLAELGYGAAGINLSAVAKQQLQELSALGYAHLPVCMAKTPLSISHDPQLKGVPQGFIVPVRELVLNAGAGFITALVGNVMTMPGLGLTPGYLKIDIDVDGEIIGLG</sequence>
<organism>
    <name type="scientific">Shewanella oneidensis (strain ATCC 700550 / JCM 31522 / CIP 106686 / LMG 19005 / NCIMB 14063 / MR-1)</name>
    <dbReference type="NCBI Taxonomy" id="211586"/>
    <lineage>
        <taxon>Bacteria</taxon>
        <taxon>Pseudomonadati</taxon>
        <taxon>Pseudomonadota</taxon>
        <taxon>Gammaproteobacteria</taxon>
        <taxon>Alteromonadales</taxon>
        <taxon>Shewanellaceae</taxon>
        <taxon>Shewanella</taxon>
    </lineage>
</organism>
<accession>Q8EJA7</accession>
<proteinExistence type="inferred from homology"/>